<accession>Q85FH1</accession>
<reference key="1">
    <citation type="journal article" date="2003" name="DNA Res.">
        <title>Complete nucleotide sequence of the chloroplast genome from a leptosporangiate fern, Adiantum capillus-veneris L.</title>
        <authorList>
            <person name="Wolf P.G."/>
            <person name="Rowe C.A."/>
            <person name="Sinclair R.B."/>
            <person name="Hasebe M."/>
        </authorList>
    </citation>
    <scope>NUCLEOTIDE SEQUENCE [LARGE SCALE GENOMIC DNA]</scope>
</reference>
<reference key="2">
    <citation type="journal article" date="2004" name="Gene">
        <title>High levels of RNA editing in a vascular plant chloroplast genome: analysis of transcripts from the fern Adiantum capillus-veneris.</title>
        <authorList>
            <person name="Wolf P.G."/>
            <person name="Rowe C.A."/>
            <person name="Hasebe M."/>
        </authorList>
    </citation>
    <scope>NUCLEOTIDE SEQUENCE [GENOMIC DNA]</scope>
    <scope>RNA EDITING</scope>
    <source>
        <tissue>Frond</tissue>
    </source>
</reference>
<geneLocation type="chloroplast"/>
<protein>
    <recommendedName>
        <fullName evidence="1">NAD(P)H-quinone oxidoreductase subunit I, chloroplastic</fullName>
        <ecNumber evidence="1">7.1.1.-</ecNumber>
    </recommendedName>
    <alternativeName>
        <fullName evidence="1">NAD(P)H dehydrogenase subunit I</fullName>
        <shortName evidence="1">NDH subunit I</shortName>
    </alternativeName>
    <alternativeName>
        <fullName evidence="1">NADH-plastoquinone oxidoreductase subunit I</fullName>
    </alternativeName>
</protein>
<evidence type="ECO:0000255" key="1">
    <source>
        <dbReference type="HAMAP-Rule" id="MF_01351"/>
    </source>
</evidence>
<evidence type="ECO:0000269" key="2">
    <source>
    </source>
</evidence>
<keyword id="KW-0004">4Fe-4S</keyword>
<keyword id="KW-0150">Chloroplast</keyword>
<keyword id="KW-0408">Iron</keyword>
<keyword id="KW-0411">Iron-sulfur</keyword>
<keyword id="KW-0472">Membrane</keyword>
<keyword id="KW-0479">Metal-binding</keyword>
<keyword id="KW-0520">NAD</keyword>
<keyword id="KW-0521">NADP</keyword>
<keyword id="KW-0934">Plastid</keyword>
<keyword id="KW-0618">Plastoquinone</keyword>
<keyword id="KW-0874">Quinone</keyword>
<keyword id="KW-0677">Repeat</keyword>
<keyword id="KW-0691">RNA editing</keyword>
<keyword id="KW-0793">Thylakoid</keyword>
<keyword id="KW-1278">Translocase</keyword>
<name>NDHI_ADICA</name>
<sequence length="167" mass="19356">MFLAIIKFQNYGQQVLEAANYIGQGFAVTLDHLNRLPITVQYPYEKKLPSERFRGRIHFEFDKCIACEVCVRVCPINLPVVDWIFLKDVKKKKLKNYSIDFGVCIFCGNCVEYCPTNCLSMTEEYELSSYNRHELNFDQTALGRLPPPASEDVSIQLVLNSRNSFRR</sequence>
<organism>
    <name type="scientific">Adiantum capillus-veneris</name>
    <name type="common">Maidenhair fern</name>
    <dbReference type="NCBI Taxonomy" id="13818"/>
    <lineage>
        <taxon>Eukaryota</taxon>
        <taxon>Viridiplantae</taxon>
        <taxon>Streptophyta</taxon>
        <taxon>Embryophyta</taxon>
        <taxon>Tracheophyta</taxon>
        <taxon>Polypodiopsida</taxon>
        <taxon>Polypodiidae</taxon>
        <taxon>Polypodiales</taxon>
        <taxon>Pteridineae</taxon>
        <taxon>Pteridaceae</taxon>
        <taxon>Vittarioideae</taxon>
        <taxon>Adiantum</taxon>
    </lineage>
</organism>
<gene>
    <name evidence="1" type="primary">ndhI</name>
</gene>
<comment type="function">
    <text evidence="1">NDH shuttles electrons from NAD(P)H:plastoquinone, via FMN and iron-sulfur (Fe-S) centers, to quinones in the photosynthetic chain and possibly in a chloroplast respiratory chain. The immediate electron acceptor for the enzyme in this species is believed to be plastoquinone. Couples the redox reaction to proton translocation, and thus conserves the redox energy in a proton gradient.</text>
</comment>
<comment type="catalytic activity">
    <reaction evidence="1">
        <text>a plastoquinone + NADH + (n+1) H(+)(in) = a plastoquinol + NAD(+) + n H(+)(out)</text>
        <dbReference type="Rhea" id="RHEA:42608"/>
        <dbReference type="Rhea" id="RHEA-COMP:9561"/>
        <dbReference type="Rhea" id="RHEA-COMP:9562"/>
        <dbReference type="ChEBI" id="CHEBI:15378"/>
        <dbReference type="ChEBI" id="CHEBI:17757"/>
        <dbReference type="ChEBI" id="CHEBI:57540"/>
        <dbReference type="ChEBI" id="CHEBI:57945"/>
        <dbReference type="ChEBI" id="CHEBI:62192"/>
    </reaction>
</comment>
<comment type="catalytic activity">
    <reaction evidence="1">
        <text>a plastoquinone + NADPH + (n+1) H(+)(in) = a plastoquinol + NADP(+) + n H(+)(out)</text>
        <dbReference type="Rhea" id="RHEA:42612"/>
        <dbReference type="Rhea" id="RHEA-COMP:9561"/>
        <dbReference type="Rhea" id="RHEA-COMP:9562"/>
        <dbReference type="ChEBI" id="CHEBI:15378"/>
        <dbReference type="ChEBI" id="CHEBI:17757"/>
        <dbReference type="ChEBI" id="CHEBI:57783"/>
        <dbReference type="ChEBI" id="CHEBI:58349"/>
        <dbReference type="ChEBI" id="CHEBI:62192"/>
    </reaction>
</comment>
<comment type="cofactor">
    <cofactor evidence="1">
        <name>[4Fe-4S] cluster</name>
        <dbReference type="ChEBI" id="CHEBI:49883"/>
    </cofactor>
    <text evidence="1">Binds 2 [4Fe-4S] clusters per subunit.</text>
</comment>
<comment type="subunit">
    <text evidence="1">NDH is composed of at least 16 different subunits, 5 of which are encoded in the nucleus.</text>
</comment>
<comment type="subcellular location">
    <subcellularLocation>
        <location evidence="1">Plastid</location>
        <location evidence="1">Chloroplast thylakoid membrane</location>
        <topology evidence="1">Peripheral membrane protein</topology>
    </subcellularLocation>
</comment>
<comment type="RNA editing">
    <location>
        <position position="33" evidence="2"/>
    </location>
    <location>
        <position position="70" evidence="2"/>
    </location>
</comment>
<comment type="similarity">
    <text evidence="1">Belongs to the complex I 23 kDa subunit family.</text>
</comment>
<feature type="chain" id="PRO_0000118702" description="NAD(P)H-quinone oxidoreductase subunit I, chloroplastic">
    <location>
        <begin position="1"/>
        <end position="167"/>
    </location>
</feature>
<feature type="domain" description="4Fe-4S ferredoxin-type 1" evidence="1">
    <location>
        <begin position="55"/>
        <end position="84"/>
    </location>
</feature>
<feature type="domain" description="4Fe-4S ferredoxin-type 2" evidence="1">
    <location>
        <begin position="95"/>
        <end position="124"/>
    </location>
</feature>
<feature type="binding site" evidence="1">
    <location>
        <position position="64"/>
    </location>
    <ligand>
        <name>[4Fe-4S] cluster</name>
        <dbReference type="ChEBI" id="CHEBI:49883"/>
        <label>1</label>
    </ligand>
</feature>
<feature type="binding site" evidence="1">
    <location>
        <position position="67"/>
    </location>
    <ligand>
        <name>[4Fe-4S] cluster</name>
        <dbReference type="ChEBI" id="CHEBI:49883"/>
        <label>1</label>
    </ligand>
</feature>
<feature type="binding site" evidence="1">
    <location>
        <position position="70"/>
    </location>
    <ligand>
        <name>[4Fe-4S] cluster</name>
        <dbReference type="ChEBI" id="CHEBI:49883"/>
        <label>1</label>
    </ligand>
</feature>
<feature type="binding site" evidence="1">
    <location>
        <position position="74"/>
    </location>
    <ligand>
        <name>[4Fe-4S] cluster</name>
        <dbReference type="ChEBI" id="CHEBI:49883"/>
        <label>2</label>
    </ligand>
</feature>
<feature type="binding site" evidence="1">
    <location>
        <position position="104"/>
    </location>
    <ligand>
        <name>[4Fe-4S] cluster</name>
        <dbReference type="ChEBI" id="CHEBI:49883"/>
        <label>2</label>
    </ligand>
</feature>
<feature type="binding site" evidence="1">
    <location>
        <position position="107"/>
    </location>
    <ligand>
        <name>[4Fe-4S] cluster</name>
        <dbReference type="ChEBI" id="CHEBI:49883"/>
        <label>2</label>
    </ligand>
</feature>
<feature type="binding site" evidence="1">
    <location>
        <position position="110"/>
    </location>
    <ligand>
        <name>[4Fe-4S] cluster</name>
        <dbReference type="ChEBI" id="CHEBI:49883"/>
        <label>2</label>
    </ligand>
</feature>
<feature type="binding site" evidence="1">
    <location>
        <position position="114"/>
    </location>
    <ligand>
        <name>[4Fe-4S] cluster</name>
        <dbReference type="ChEBI" id="CHEBI:49883"/>
        <label>1</label>
    </ligand>
</feature>
<proteinExistence type="evidence at transcript level"/>
<dbReference type="EC" id="7.1.1.-" evidence="1"/>
<dbReference type="EMBL" id="AY178864">
    <property type="protein sequence ID" value="AAP29445.2"/>
    <property type="molecule type" value="Genomic_DNA"/>
</dbReference>
<dbReference type="RefSeq" id="NP_848114.1">
    <property type="nucleotide sequence ID" value="NC_004766.1"/>
</dbReference>
<dbReference type="SMR" id="Q85FH1"/>
<dbReference type="GeneID" id="807446"/>
<dbReference type="GO" id="GO:0009535">
    <property type="term" value="C:chloroplast thylakoid membrane"/>
    <property type="evidence" value="ECO:0007669"/>
    <property type="project" value="UniProtKB-SubCell"/>
</dbReference>
<dbReference type="GO" id="GO:0051539">
    <property type="term" value="F:4 iron, 4 sulfur cluster binding"/>
    <property type="evidence" value="ECO:0007669"/>
    <property type="project" value="UniProtKB-KW"/>
</dbReference>
<dbReference type="GO" id="GO:0005506">
    <property type="term" value="F:iron ion binding"/>
    <property type="evidence" value="ECO:0007669"/>
    <property type="project" value="UniProtKB-UniRule"/>
</dbReference>
<dbReference type="GO" id="GO:0008137">
    <property type="term" value="F:NADH dehydrogenase (ubiquinone) activity"/>
    <property type="evidence" value="ECO:0007669"/>
    <property type="project" value="InterPro"/>
</dbReference>
<dbReference type="GO" id="GO:0048038">
    <property type="term" value="F:quinone binding"/>
    <property type="evidence" value="ECO:0007669"/>
    <property type="project" value="UniProtKB-KW"/>
</dbReference>
<dbReference type="GO" id="GO:0019684">
    <property type="term" value="P:photosynthesis, light reaction"/>
    <property type="evidence" value="ECO:0007669"/>
    <property type="project" value="UniProtKB-UniRule"/>
</dbReference>
<dbReference type="Gene3D" id="3.30.70.3270">
    <property type="match status" value="1"/>
</dbReference>
<dbReference type="HAMAP" id="MF_01351">
    <property type="entry name" value="NDH1_NuoI"/>
    <property type="match status" value="1"/>
</dbReference>
<dbReference type="InterPro" id="IPR017896">
    <property type="entry name" value="4Fe4S_Fe-S-bd"/>
</dbReference>
<dbReference type="InterPro" id="IPR017900">
    <property type="entry name" value="4Fe4S_Fe_S_CS"/>
</dbReference>
<dbReference type="InterPro" id="IPR010226">
    <property type="entry name" value="NADH_quinone_OxRdtase_chainI"/>
</dbReference>
<dbReference type="InterPro" id="IPR004497">
    <property type="entry name" value="NDHI"/>
</dbReference>
<dbReference type="NCBIfam" id="TIGR00403">
    <property type="entry name" value="ndhI"/>
    <property type="match status" value="1"/>
</dbReference>
<dbReference type="NCBIfam" id="TIGR01971">
    <property type="entry name" value="NuoI"/>
    <property type="match status" value="1"/>
</dbReference>
<dbReference type="NCBIfam" id="NF004537">
    <property type="entry name" value="PRK05888.1-3"/>
    <property type="match status" value="1"/>
</dbReference>
<dbReference type="PANTHER" id="PTHR47275">
    <property type="entry name" value="NAD(P)H-QUINONE OXIDOREDUCTASE SUBUNIT I, CHLOROPLASTIC"/>
    <property type="match status" value="1"/>
</dbReference>
<dbReference type="PANTHER" id="PTHR47275:SF1">
    <property type="entry name" value="NAD(P)H-QUINONE OXIDOREDUCTASE SUBUNIT I, CHLOROPLASTIC"/>
    <property type="match status" value="1"/>
</dbReference>
<dbReference type="Pfam" id="PF12838">
    <property type="entry name" value="Fer4_7"/>
    <property type="match status" value="1"/>
</dbReference>
<dbReference type="SUPFAM" id="SSF54862">
    <property type="entry name" value="4Fe-4S ferredoxins"/>
    <property type="match status" value="1"/>
</dbReference>
<dbReference type="PROSITE" id="PS00198">
    <property type="entry name" value="4FE4S_FER_1"/>
    <property type="match status" value="2"/>
</dbReference>
<dbReference type="PROSITE" id="PS51379">
    <property type="entry name" value="4FE4S_FER_2"/>
    <property type="match status" value="2"/>
</dbReference>